<evidence type="ECO:0000255" key="1"/>
<evidence type="ECO:0000305" key="2"/>
<sequence length="293" mass="31909">MSPNSEATGTAWAPPPPRPSRGVIMISSVSTNDVRRFLLCMRVYSTVAVQGTCTFLLCLGLVLAFPHLKGTVFLCCTGFMPPLSLMVPTICLALLHGKRDEGSFTSPPSPGLLTIYSVLTTLSVIVASACSSSTLVTFSGLLACVLFSLCSCVTGLAGHNHRRWQVIVTLFVIGVIAFLIALYLQPVPLGHKLFLGYYAMALSFMLVVTVFDTTRLFEIAWSEADLLTLCLYENLVYLYLLILILFTTEDSLDKLIAWMTWLSSRATGATNAASISGCDLLREVQRNLTRTMA</sequence>
<protein>
    <recommendedName>
        <fullName>Uncharacterized protein HVLF1</fullName>
    </recommendedName>
</protein>
<organism>
    <name type="scientific">Human cytomegalovirus (strain AD169)</name>
    <name type="common">HHV-5</name>
    <name type="synonym">Human herpesvirus 5</name>
    <dbReference type="NCBI Taxonomy" id="10360"/>
    <lineage>
        <taxon>Viruses</taxon>
        <taxon>Duplodnaviria</taxon>
        <taxon>Heunggongvirae</taxon>
        <taxon>Peploviricota</taxon>
        <taxon>Herviviricetes</taxon>
        <taxon>Herpesvirales</taxon>
        <taxon>Orthoherpesviridae</taxon>
        <taxon>Betaherpesvirinae</taxon>
        <taxon>Cytomegalovirus</taxon>
        <taxon>Cytomegalovirus humanbeta5</taxon>
        <taxon>Human cytomegalovirus</taxon>
    </lineage>
</organism>
<feature type="chain" id="PRO_0000115276" description="Uncharacterized protein HVLF1">
    <location>
        <begin position="1"/>
        <end position="293"/>
    </location>
</feature>
<feature type="transmembrane region" description="Helical" evidence="1">
    <location>
        <begin position="55"/>
        <end position="75"/>
    </location>
</feature>
<feature type="transmembrane region" description="Helical" evidence="1">
    <location>
        <begin position="77"/>
        <end position="97"/>
    </location>
</feature>
<feature type="transmembrane region" description="Helical" evidence="1">
    <location>
        <begin position="110"/>
        <end position="130"/>
    </location>
</feature>
<feature type="transmembrane region" description="Helical" evidence="1">
    <location>
        <begin position="138"/>
        <end position="158"/>
    </location>
</feature>
<feature type="transmembrane region" description="Helical" evidence="1">
    <location>
        <begin position="164"/>
        <end position="184"/>
    </location>
</feature>
<feature type="transmembrane region" description="Helical" evidence="1">
    <location>
        <begin position="193"/>
        <end position="213"/>
    </location>
</feature>
<feature type="transmembrane region" description="Helical" evidence="1">
    <location>
        <begin position="226"/>
        <end position="246"/>
    </location>
</feature>
<feature type="glycosylation site" description="N-linked (GlcNAc...) asparagine; by host" evidence="1">
    <location>
        <position position="287"/>
    </location>
</feature>
<name>US17_HCMVA</name>
<proteinExistence type="inferred from homology"/>
<organismHost>
    <name type="scientific">Homo sapiens</name>
    <name type="common">Human</name>
    <dbReference type="NCBI Taxonomy" id="9606"/>
</organismHost>
<dbReference type="EMBL" id="X17403">
    <property type="protein sequence ID" value="CAA35284.1"/>
    <property type="molecule type" value="Genomic_DNA"/>
</dbReference>
<dbReference type="EMBL" id="X04650">
    <property type="protein sequence ID" value="CAB37109.1"/>
    <property type="molecule type" value="Genomic_DNA"/>
</dbReference>
<dbReference type="EMBL" id="BK000394">
    <property type="protein sequence ID" value="DAA00205.1"/>
    <property type="molecule type" value="Genomic_DNA"/>
</dbReference>
<dbReference type="PIR" id="A27231">
    <property type="entry name" value="QQBEG1"/>
</dbReference>
<dbReference type="RefSeq" id="YP_081602.1">
    <property type="nucleotide sequence ID" value="NC_006273.2"/>
</dbReference>
<dbReference type="GlyCosmos" id="P09716">
    <property type="glycosylation" value="1 site, No reported glycans"/>
</dbReference>
<dbReference type="GeneID" id="3077567"/>
<dbReference type="KEGG" id="vg:3077567"/>
<dbReference type="Proteomes" id="UP000008991">
    <property type="component" value="Segment"/>
</dbReference>
<dbReference type="Proteomes" id="UP000008992">
    <property type="component" value="Segment"/>
</dbReference>
<dbReference type="GO" id="GO:0016020">
    <property type="term" value="C:membrane"/>
    <property type="evidence" value="ECO:0007669"/>
    <property type="project" value="UniProtKB-SubCell"/>
</dbReference>
<dbReference type="InterPro" id="IPR006214">
    <property type="entry name" value="Bax_inhibitor_1-related"/>
</dbReference>
<dbReference type="Pfam" id="PF01027">
    <property type="entry name" value="Bax1-I"/>
    <property type="match status" value="1"/>
</dbReference>
<gene>
    <name type="primary">US17</name>
</gene>
<reference key="1">
    <citation type="journal article" date="1986" name="J. Mol. Biol.">
        <title>Sequence of the short unique region, short repeats, and part of the long repeats of human cytomegalovirus.</title>
        <authorList>
            <person name="Weston K.M."/>
            <person name="Barrell B.G."/>
        </authorList>
    </citation>
    <scope>NUCLEOTIDE SEQUENCE [GENOMIC DNA]</scope>
</reference>
<reference key="2">
    <citation type="journal article" date="1990" name="Curr. Top. Microbiol. Immunol.">
        <title>Analysis of the protein-coding content of the sequence of human cytomegalovirus strain AD169.</title>
        <authorList>
            <person name="Chee M.S."/>
            <person name="Bankier A.T."/>
            <person name="Beck S."/>
            <person name="Bohni R."/>
            <person name="Brown C.M."/>
            <person name="Cerny R."/>
            <person name="Horsnell T."/>
            <person name="Hutchison C.A. III"/>
            <person name="Kouzarides T."/>
            <person name="Martignetti J.A."/>
            <person name="Preddie E."/>
            <person name="Satchwell S.C."/>
            <person name="Tomlinson P."/>
            <person name="Weston K.M."/>
            <person name="Barrell B.G."/>
        </authorList>
    </citation>
    <scope>NUCLEOTIDE SEQUENCE [LARGE SCALE GENOMIC DNA]</scope>
</reference>
<reference key="3">
    <citation type="journal article" date="2003" name="J. Gen. Virol.">
        <title>The human cytomegalovirus genome revisited: comparison with the chimpanzee cytomegalovirus genome.</title>
        <authorList>
            <person name="Davison A.J."/>
            <person name="Dolan A."/>
            <person name="Akter P."/>
            <person name="Addison C."/>
            <person name="Dargan D.J."/>
            <person name="Alcendor D.J."/>
            <person name="McGeoch D.J."/>
            <person name="Hayward G.S."/>
        </authorList>
    </citation>
    <scope>GENOME REANNOTATION</scope>
</reference>
<reference key="4">
    <citation type="journal article" date="2003" name="J. Gen. Virol.">
        <authorList>
            <person name="Davison A.J."/>
            <person name="Dolan A."/>
            <person name="Akter P."/>
            <person name="Addison C."/>
            <person name="Dargan D.J."/>
            <person name="Alcendor D.J."/>
            <person name="McGeoch D.J."/>
            <person name="Hayward G.S."/>
        </authorList>
    </citation>
    <scope>ERRATUM OF PUBMED:12533697</scope>
</reference>
<accession>P09716</accession>
<accession>Q7M6I3</accession>
<comment type="subcellular location">
    <subcellularLocation>
        <location evidence="2">Membrane</location>
        <topology evidence="2">Multi-pass membrane protein</topology>
    </subcellularLocation>
</comment>
<comment type="similarity">
    <text evidence="2">Belongs to the cytomegalovirus US12 family.</text>
</comment>
<keyword id="KW-0325">Glycoprotein</keyword>
<keyword id="KW-0472">Membrane</keyword>
<keyword id="KW-1185">Reference proteome</keyword>
<keyword id="KW-0812">Transmembrane</keyword>
<keyword id="KW-1133">Transmembrane helix</keyword>